<organism>
    <name type="scientific">Homo sapiens</name>
    <name type="common">Human</name>
    <dbReference type="NCBI Taxonomy" id="9606"/>
    <lineage>
        <taxon>Eukaryota</taxon>
        <taxon>Metazoa</taxon>
        <taxon>Chordata</taxon>
        <taxon>Craniata</taxon>
        <taxon>Vertebrata</taxon>
        <taxon>Euteleostomi</taxon>
        <taxon>Mammalia</taxon>
        <taxon>Eutheria</taxon>
        <taxon>Euarchontoglires</taxon>
        <taxon>Primates</taxon>
        <taxon>Haplorrhini</taxon>
        <taxon>Catarrhini</taxon>
        <taxon>Hominidae</taxon>
        <taxon>Homo</taxon>
    </lineage>
</organism>
<comment type="function">
    <text evidence="12">Alpha-L-fucosidase is responsible for hydrolyzing the alpha-1,6-linked fucose joined to the reducing-end N-acetylglucosamine of the carbohydrate moieties of glycoproteins.</text>
</comment>
<comment type="catalytic activity">
    <reaction evidence="2">
        <text>an alpha-L-fucoside + H2O = L-fucose + an alcohol</text>
        <dbReference type="Rhea" id="RHEA:12288"/>
        <dbReference type="ChEBI" id="CHEBI:2181"/>
        <dbReference type="ChEBI" id="CHEBI:15377"/>
        <dbReference type="ChEBI" id="CHEBI:28349"/>
        <dbReference type="ChEBI" id="CHEBI:30879"/>
        <dbReference type="EC" id="3.2.1.51"/>
    </reaction>
    <physiologicalReaction direction="left-to-right" evidence="14">
        <dbReference type="Rhea" id="RHEA:12289"/>
    </physiologicalReaction>
</comment>
<comment type="catalytic activity">
    <reaction evidence="12">
        <text>a neolactoside IV(2)-alpha-Fuc-nLc4Cer(d18:1(4E)) + H2O = a neolactoside nLc4Cer(d18:1(4E)) + L-fucose</text>
        <dbReference type="Rhea" id="RHEA:48224"/>
        <dbReference type="ChEBI" id="CHEBI:2181"/>
        <dbReference type="ChEBI" id="CHEBI:15377"/>
        <dbReference type="ChEBI" id="CHEBI:17006"/>
        <dbReference type="ChEBI" id="CHEBI:28691"/>
    </reaction>
    <physiologicalReaction direction="left-to-right" evidence="12">
        <dbReference type="Rhea" id="RHEA:48225"/>
    </physiologicalReaction>
</comment>
<comment type="catalytic activity">
    <reaction evidence="12">
        <text>a neolactoside IV(2)-alpha-Fuc-nLc4Cer(d18:0) + H2O = a neolactoside nLc4Cer(d18:0) + L-fucose</text>
        <dbReference type="Rhea" id="RHEA:49308"/>
        <dbReference type="ChEBI" id="CHEBI:2181"/>
        <dbReference type="ChEBI" id="CHEBI:15377"/>
        <dbReference type="ChEBI" id="CHEBI:91119"/>
        <dbReference type="ChEBI" id="CHEBI:91121"/>
    </reaction>
    <physiologicalReaction direction="left-to-right" evidence="12">
        <dbReference type="Rhea" id="RHEA:49309"/>
    </physiologicalReaction>
</comment>
<comment type="subunit">
    <text>Homotetramer.</text>
</comment>
<comment type="interaction">
    <interactant intactId="EBI-2512153">
        <id>P04066</id>
    </interactant>
    <interactant intactId="EBI-372594">
        <id>Q99828</id>
        <label>CIB1</label>
    </interactant>
    <organismsDiffer>false</organismsDiffer>
    <experiments>3</experiments>
</comment>
<comment type="interaction">
    <interactant intactId="EBI-2512153">
        <id>P04066</id>
    </interactant>
    <interactant intactId="EBI-394354">
        <id>Q9BTT4</id>
        <label>MED10</label>
    </interactant>
    <organismsDiffer>false</organismsDiffer>
    <experiments>3</experiments>
</comment>
<comment type="interaction">
    <interactant intactId="EBI-2512153">
        <id>P04066</id>
    </interactant>
    <interactant intactId="EBI-947187">
        <id>Q9UHD9</id>
        <label>UBQLN2</label>
    </interactant>
    <organismsDiffer>false</organismsDiffer>
    <experiments>5</experiments>
</comment>
<comment type="subcellular location">
    <subcellularLocation>
        <location evidence="12">Lysosome</location>
    </subcellularLocation>
</comment>
<comment type="polymorphism">
    <text>There are two common alleles of FUCA1; FUCA1*1; also known as Fu1; has Arg-281 and FUCA1*2; also known as Fu2; has Gln-281.</text>
</comment>
<comment type="disease" evidence="9 11 13">
    <disease id="DI-00501">
        <name>Fucosidosis</name>
        <acronym>FUCA1D</acronym>
        <description>An autosomal recessive lysosomal storage disease characterized by accumulation of fucose-containing glycolipids and glycoproteins in various tissues. Clinical signs include facial dysmorphism, dysostosis multiplex, moderate hepatomegaly, severe intellectual deficit, deafness, and according to age, angiokeratomas.</description>
        <dbReference type="MIM" id="230000"/>
    </disease>
    <text>The disease is caused by variants affecting the gene represented in this entry.</text>
</comment>
<comment type="similarity">
    <text evidence="14">Belongs to the glycosyl hydrolase 29 family.</text>
</comment>
<comment type="sequence caution" evidence="14">
    <conflict type="erroneous initiation">
        <sequence resource="EMBL-CDS" id="AAA35519"/>
    </conflict>
    <text>Truncated N-terminus.</text>
</comment>
<comment type="sequence caution" evidence="14">
    <conflict type="erroneous initiation">
        <sequence resource="EMBL-CDS" id="AAA52481"/>
    </conflict>
    <text>Truncated N-terminus.</text>
</comment>
<comment type="sequence caution" evidence="14">
    <conflict type="erroneous initiation">
        <sequence resource="EMBL-CDS" id="AAH17338"/>
    </conflict>
    <text>Truncated N-terminus.</text>
</comment>
<comment type="sequence caution" evidence="14">
    <conflict type="erroneous initiation">
        <sequence resource="EMBL-CDS" id="BAG37210"/>
    </conflict>
    <text>Truncated N-terminus.</text>
</comment>
<comment type="sequence caution" evidence="14">
    <conflict type="miscellaneous discrepancy">
        <sequence resource="EMBL-CDS" id="CAA25646"/>
    </conflict>
    <text>Translation of X01390 sequence produces a larger peptide than that shown in CAA25646.1.</text>
</comment>
<evidence type="ECO:0000255" key="1"/>
<evidence type="ECO:0000255" key="2">
    <source>
        <dbReference type="PROSITE-ProRule" id="PRU10054"/>
    </source>
</evidence>
<evidence type="ECO:0000269" key="3">
    <source>
    </source>
</evidence>
<evidence type="ECO:0000269" key="4">
    <source>
    </source>
</evidence>
<evidence type="ECO:0000269" key="5">
    <source>
    </source>
</evidence>
<evidence type="ECO:0000269" key="6">
    <source>
    </source>
</evidence>
<evidence type="ECO:0000269" key="7">
    <source>
    </source>
</evidence>
<evidence type="ECO:0000269" key="8">
    <source>
    </source>
</evidence>
<evidence type="ECO:0000269" key="9">
    <source>
    </source>
</evidence>
<evidence type="ECO:0000269" key="10">
    <source>
    </source>
</evidence>
<evidence type="ECO:0000269" key="11">
    <source>
    </source>
</evidence>
<evidence type="ECO:0000269" key="12">
    <source>
    </source>
</evidence>
<evidence type="ECO:0000269" key="13">
    <source>
    </source>
</evidence>
<evidence type="ECO:0000305" key="14"/>
<evidence type="ECO:0000305" key="15">
    <source>
    </source>
</evidence>
<evidence type="ECO:0000312" key="16">
    <source>
        <dbReference type="HGNC" id="HGNC:4006"/>
    </source>
</evidence>
<evidence type="ECO:0007744" key="17">
    <source>
    </source>
</evidence>
<evidence type="ECO:0007829" key="18">
    <source>
        <dbReference type="PDB" id="7PLS"/>
    </source>
</evidence>
<keyword id="KW-0002">3D-structure</keyword>
<keyword id="KW-0225">Disease variant</keyword>
<keyword id="KW-0325">Glycoprotein</keyword>
<keyword id="KW-0326">Glycosidase</keyword>
<keyword id="KW-0378">Hydrolase</keyword>
<keyword id="KW-0443">Lipid metabolism</keyword>
<keyword id="KW-0458">Lysosome</keyword>
<keyword id="KW-0597">Phosphoprotein</keyword>
<keyword id="KW-1267">Proteomics identification</keyword>
<keyword id="KW-1185">Reference proteome</keyword>
<keyword id="KW-0732">Signal</keyword>
<accession>P04066</accession>
<accession>B2RBG3</accession>
<accession>Q14334</accession>
<accession>Q14335</accession>
<accession>Q3LID0</accession>
<accession>Q8NAC2</accession>
<proteinExistence type="evidence at protein level"/>
<reference key="1">
    <citation type="journal article" date="1993" name="Hum. Mol. Genet.">
        <title>Fucosidosis: four new mutations and a new polymorphism.</title>
        <authorList>
            <person name="Seo H.-C."/>
            <person name="Willems P.J."/>
            <person name="Kretz K.A."/>
            <person name="Martin B.M."/>
            <person name="O'Brien J.S."/>
        </authorList>
    </citation>
    <scope>NUCLEOTIDE SEQUENCE [GENOMIC DNA]</scope>
    <scope>VARIANT FUCA1D ASP-65</scope>
    <scope>VARIANT ARG-286</scope>
</reference>
<reference key="2">
    <citation type="journal article" date="2003" name="Cancer Lett.">
        <title>Neuroblastoma oligo-capping cDNA project: toward the understanding of the genesis and biology of neuroblastoma.</title>
        <authorList>
            <person name="Ohira M."/>
            <person name="Morohashi A."/>
            <person name="Nakamura Y."/>
            <person name="Isogai E."/>
            <person name="Furuya K."/>
            <person name="Hamano S."/>
            <person name="Machida T."/>
            <person name="Aoyama M."/>
            <person name="Fukumura M."/>
            <person name="Miyazaki K."/>
            <person name="Suzuki Y."/>
            <person name="Sugano S."/>
            <person name="Hirato J."/>
            <person name="Nakagawara A."/>
        </authorList>
    </citation>
    <scope>NUCLEOTIDE SEQUENCE [LARGE SCALE MRNA]</scope>
    <source>
        <tissue>Neuroblastoma</tissue>
    </source>
</reference>
<reference key="3">
    <citation type="journal article" date="2004" name="Nat. Genet.">
        <title>Complete sequencing and characterization of 21,243 full-length human cDNAs.</title>
        <authorList>
            <person name="Ota T."/>
            <person name="Suzuki Y."/>
            <person name="Nishikawa T."/>
            <person name="Otsuki T."/>
            <person name="Sugiyama T."/>
            <person name="Irie R."/>
            <person name="Wakamatsu A."/>
            <person name="Hayashi K."/>
            <person name="Sato H."/>
            <person name="Nagai K."/>
            <person name="Kimura K."/>
            <person name="Makita H."/>
            <person name="Sekine M."/>
            <person name="Obayashi M."/>
            <person name="Nishi T."/>
            <person name="Shibahara T."/>
            <person name="Tanaka T."/>
            <person name="Ishii S."/>
            <person name="Yamamoto J."/>
            <person name="Saito K."/>
            <person name="Kawai Y."/>
            <person name="Isono Y."/>
            <person name="Nakamura Y."/>
            <person name="Nagahari K."/>
            <person name="Murakami K."/>
            <person name="Yasuda T."/>
            <person name="Iwayanagi T."/>
            <person name="Wagatsuma M."/>
            <person name="Shiratori A."/>
            <person name="Sudo H."/>
            <person name="Hosoiri T."/>
            <person name="Kaku Y."/>
            <person name="Kodaira H."/>
            <person name="Kondo H."/>
            <person name="Sugawara M."/>
            <person name="Takahashi M."/>
            <person name="Kanda K."/>
            <person name="Yokoi T."/>
            <person name="Furuya T."/>
            <person name="Kikkawa E."/>
            <person name="Omura Y."/>
            <person name="Abe K."/>
            <person name="Kamihara K."/>
            <person name="Katsuta N."/>
            <person name="Sato K."/>
            <person name="Tanikawa M."/>
            <person name="Yamazaki M."/>
            <person name="Ninomiya K."/>
            <person name="Ishibashi T."/>
            <person name="Yamashita H."/>
            <person name="Murakawa K."/>
            <person name="Fujimori K."/>
            <person name="Tanai H."/>
            <person name="Kimata M."/>
            <person name="Watanabe M."/>
            <person name="Hiraoka S."/>
            <person name="Chiba Y."/>
            <person name="Ishida S."/>
            <person name="Ono Y."/>
            <person name="Takiguchi S."/>
            <person name="Watanabe S."/>
            <person name="Yosida M."/>
            <person name="Hotuta T."/>
            <person name="Kusano J."/>
            <person name="Kanehori K."/>
            <person name="Takahashi-Fujii A."/>
            <person name="Hara H."/>
            <person name="Tanase T.-O."/>
            <person name="Nomura Y."/>
            <person name="Togiya S."/>
            <person name="Komai F."/>
            <person name="Hara R."/>
            <person name="Takeuchi K."/>
            <person name="Arita M."/>
            <person name="Imose N."/>
            <person name="Musashino K."/>
            <person name="Yuuki H."/>
            <person name="Oshima A."/>
            <person name="Sasaki N."/>
            <person name="Aotsuka S."/>
            <person name="Yoshikawa Y."/>
            <person name="Matsunawa H."/>
            <person name="Ichihara T."/>
            <person name="Shiohata N."/>
            <person name="Sano S."/>
            <person name="Moriya S."/>
            <person name="Momiyama H."/>
            <person name="Satoh N."/>
            <person name="Takami S."/>
            <person name="Terashima Y."/>
            <person name="Suzuki O."/>
            <person name="Nakagawa S."/>
            <person name="Senoh A."/>
            <person name="Mizoguchi H."/>
            <person name="Goto Y."/>
            <person name="Shimizu F."/>
            <person name="Wakebe H."/>
            <person name="Hishigaki H."/>
            <person name="Watanabe T."/>
            <person name="Sugiyama A."/>
            <person name="Takemoto M."/>
            <person name="Kawakami B."/>
            <person name="Yamazaki M."/>
            <person name="Watanabe K."/>
            <person name="Kumagai A."/>
            <person name="Itakura S."/>
            <person name="Fukuzumi Y."/>
            <person name="Fujimori Y."/>
            <person name="Komiyama M."/>
            <person name="Tashiro H."/>
            <person name="Tanigami A."/>
            <person name="Fujiwara T."/>
            <person name="Ono T."/>
            <person name="Yamada K."/>
            <person name="Fujii Y."/>
            <person name="Ozaki K."/>
            <person name="Hirao M."/>
            <person name="Ohmori Y."/>
            <person name="Kawabata A."/>
            <person name="Hikiji T."/>
            <person name="Kobatake N."/>
            <person name="Inagaki H."/>
            <person name="Ikema Y."/>
            <person name="Okamoto S."/>
            <person name="Okitani R."/>
            <person name="Kawakami T."/>
            <person name="Noguchi S."/>
            <person name="Itoh T."/>
            <person name="Shigeta K."/>
            <person name="Senba T."/>
            <person name="Matsumura K."/>
            <person name="Nakajima Y."/>
            <person name="Mizuno T."/>
            <person name="Morinaga M."/>
            <person name="Sasaki M."/>
            <person name="Togashi T."/>
            <person name="Oyama M."/>
            <person name="Hata H."/>
            <person name="Watanabe M."/>
            <person name="Komatsu T."/>
            <person name="Mizushima-Sugano J."/>
            <person name="Satoh T."/>
            <person name="Shirai Y."/>
            <person name="Takahashi Y."/>
            <person name="Nakagawa K."/>
            <person name="Okumura K."/>
            <person name="Nagase T."/>
            <person name="Nomura N."/>
            <person name="Kikuchi H."/>
            <person name="Masuho Y."/>
            <person name="Yamashita R."/>
            <person name="Nakai K."/>
            <person name="Yada T."/>
            <person name="Nakamura Y."/>
            <person name="Ohara O."/>
            <person name="Isogai T."/>
            <person name="Sugano S."/>
        </authorList>
    </citation>
    <scope>NUCLEOTIDE SEQUENCE [LARGE SCALE MRNA]</scope>
    <scope>VARIANT ARG-286</scope>
    <source>
        <tissue>Spleen</tissue>
        <tissue>Umbilical cord blood</tissue>
    </source>
</reference>
<reference key="4">
    <citation type="journal article" date="2006" name="Nature">
        <title>The DNA sequence and biological annotation of human chromosome 1.</title>
        <authorList>
            <person name="Gregory S.G."/>
            <person name="Barlow K.F."/>
            <person name="McLay K.E."/>
            <person name="Kaul R."/>
            <person name="Swarbreck D."/>
            <person name="Dunham A."/>
            <person name="Scott C.E."/>
            <person name="Howe K.L."/>
            <person name="Woodfine K."/>
            <person name="Spencer C.C.A."/>
            <person name="Jones M.C."/>
            <person name="Gillson C."/>
            <person name="Searle S."/>
            <person name="Zhou Y."/>
            <person name="Kokocinski F."/>
            <person name="McDonald L."/>
            <person name="Evans R."/>
            <person name="Phillips K."/>
            <person name="Atkinson A."/>
            <person name="Cooper R."/>
            <person name="Jones C."/>
            <person name="Hall R.E."/>
            <person name="Andrews T.D."/>
            <person name="Lloyd C."/>
            <person name="Ainscough R."/>
            <person name="Almeida J.P."/>
            <person name="Ambrose K.D."/>
            <person name="Anderson F."/>
            <person name="Andrew R.W."/>
            <person name="Ashwell R.I.S."/>
            <person name="Aubin K."/>
            <person name="Babbage A.K."/>
            <person name="Bagguley C.L."/>
            <person name="Bailey J."/>
            <person name="Beasley H."/>
            <person name="Bethel G."/>
            <person name="Bird C.P."/>
            <person name="Bray-Allen S."/>
            <person name="Brown J.Y."/>
            <person name="Brown A.J."/>
            <person name="Buckley D."/>
            <person name="Burton J."/>
            <person name="Bye J."/>
            <person name="Carder C."/>
            <person name="Chapman J.C."/>
            <person name="Clark S.Y."/>
            <person name="Clarke G."/>
            <person name="Clee C."/>
            <person name="Cobley V."/>
            <person name="Collier R.E."/>
            <person name="Corby N."/>
            <person name="Coville G.J."/>
            <person name="Davies J."/>
            <person name="Deadman R."/>
            <person name="Dunn M."/>
            <person name="Earthrowl M."/>
            <person name="Ellington A.G."/>
            <person name="Errington H."/>
            <person name="Frankish A."/>
            <person name="Frankland J."/>
            <person name="French L."/>
            <person name="Garner P."/>
            <person name="Garnett J."/>
            <person name="Gay L."/>
            <person name="Ghori M.R.J."/>
            <person name="Gibson R."/>
            <person name="Gilby L.M."/>
            <person name="Gillett W."/>
            <person name="Glithero R.J."/>
            <person name="Grafham D.V."/>
            <person name="Griffiths C."/>
            <person name="Griffiths-Jones S."/>
            <person name="Grocock R."/>
            <person name="Hammond S."/>
            <person name="Harrison E.S.I."/>
            <person name="Hart E."/>
            <person name="Haugen E."/>
            <person name="Heath P.D."/>
            <person name="Holmes S."/>
            <person name="Holt K."/>
            <person name="Howden P.J."/>
            <person name="Hunt A.R."/>
            <person name="Hunt S.E."/>
            <person name="Hunter G."/>
            <person name="Isherwood J."/>
            <person name="James R."/>
            <person name="Johnson C."/>
            <person name="Johnson D."/>
            <person name="Joy A."/>
            <person name="Kay M."/>
            <person name="Kershaw J.K."/>
            <person name="Kibukawa M."/>
            <person name="Kimberley A.M."/>
            <person name="King A."/>
            <person name="Knights A.J."/>
            <person name="Lad H."/>
            <person name="Laird G."/>
            <person name="Lawlor S."/>
            <person name="Leongamornlert D.A."/>
            <person name="Lloyd D.M."/>
            <person name="Loveland J."/>
            <person name="Lovell J."/>
            <person name="Lush M.J."/>
            <person name="Lyne R."/>
            <person name="Martin S."/>
            <person name="Mashreghi-Mohammadi M."/>
            <person name="Matthews L."/>
            <person name="Matthews N.S.W."/>
            <person name="McLaren S."/>
            <person name="Milne S."/>
            <person name="Mistry S."/>
            <person name="Moore M.J.F."/>
            <person name="Nickerson T."/>
            <person name="O'Dell C.N."/>
            <person name="Oliver K."/>
            <person name="Palmeiri A."/>
            <person name="Palmer S.A."/>
            <person name="Parker A."/>
            <person name="Patel D."/>
            <person name="Pearce A.V."/>
            <person name="Peck A.I."/>
            <person name="Pelan S."/>
            <person name="Phelps K."/>
            <person name="Phillimore B.J."/>
            <person name="Plumb R."/>
            <person name="Rajan J."/>
            <person name="Raymond C."/>
            <person name="Rouse G."/>
            <person name="Saenphimmachak C."/>
            <person name="Sehra H.K."/>
            <person name="Sheridan E."/>
            <person name="Shownkeen R."/>
            <person name="Sims S."/>
            <person name="Skuce C.D."/>
            <person name="Smith M."/>
            <person name="Steward C."/>
            <person name="Subramanian S."/>
            <person name="Sycamore N."/>
            <person name="Tracey A."/>
            <person name="Tromans A."/>
            <person name="Van Helmond Z."/>
            <person name="Wall M."/>
            <person name="Wallis J.M."/>
            <person name="White S."/>
            <person name="Whitehead S.L."/>
            <person name="Wilkinson J.E."/>
            <person name="Willey D.L."/>
            <person name="Williams H."/>
            <person name="Wilming L."/>
            <person name="Wray P.W."/>
            <person name="Wu Z."/>
            <person name="Coulson A."/>
            <person name="Vaudin M."/>
            <person name="Sulston J.E."/>
            <person name="Durbin R.M."/>
            <person name="Hubbard T."/>
            <person name="Wooster R."/>
            <person name="Dunham I."/>
            <person name="Carter N.P."/>
            <person name="McVean G."/>
            <person name="Ross M.T."/>
            <person name="Harrow J."/>
            <person name="Olson M.V."/>
            <person name="Beck S."/>
            <person name="Rogers J."/>
            <person name="Bentley D.R."/>
        </authorList>
    </citation>
    <scope>NUCLEOTIDE SEQUENCE [LARGE SCALE GENOMIC DNA]</scope>
</reference>
<reference key="5">
    <citation type="journal article" date="2004" name="Genome Res.">
        <title>The status, quality, and expansion of the NIH full-length cDNA project: the Mammalian Gene Collection (MGC).</title>
        <authorList>
            <consortium name="The MGC Project Team"/>
        </authorList>
    </citation>
    <scope>NUCLEOTIDE SEQUENCE [LARGE SCALE MRNA]</scope>
    <source>
        <tissue>Skin</tissue>
    </source>
</reference>
<reference key="6">
    <citation type="journal article" date="1989" name="Biochem. Biophys. Res. Commun.">
        <title>Human alpha-L-fucosidase: complete coding sequence from cDNA clones.</title>
        <authorList>
            <person name="Occhiodoro T."/>
            <person name="Beckmann K.R."/>
            <person name="Morris C.P."/>
            <person name="Hopwood J.J."/>
        </authorList>
    </citation>
    <scope>NUCLEOTIDE SEQUENCE [MRNA] OF 2-466</scope>
    <scope>VARIANT SER-269</scope>
</reference>
<reference key="7">
    <citation type="journal article" date="1990" name="J. Inherit. Metab. Dis.">
        <title>Sequencing and expression of a full-length cDNA for human alpha-L-fucosidase.</title>
        <authorList>
            <person name="Fukushima H."/>
            <person name="Nishimoto J."/>
            <person name="Okada S."/>
        </authorList>
    </citation>
    <scope>NUCLEOTIDE SEQUENCE [MRNA] OF 3-92</scope>
    <source>
        <tissue>Placenta</tissue>
    </source>
</reference>
<reference key="8">
    <citation type="journal article" date="1985" name="Proc. Natl. Acad. Sci. U.S.A.">
        <title>Molecular cloning of a cDNA for human alpha-L-fucosidase.</title>
        <authorList>
            <person name="Fukushima H."/>
            <person name="de Wet J.R."/>
            <person name="O'Brien J.S."/>
        </authorList>
    </citation>
    <scope>NUCLEOTIDE SEQUENCE [MRNA] OF 75-427</scope>
</reference>
<reference key="9">
    <citation type="journal article" date="1984" name="DNA">
        <title>Chromogenic immunodetection of human serum albumin and alpha-L-fucosidase clones in a human hepatoma cDNA expression library.</title>
        <authorList>
            <person name="de Wet J.R."/>
            <person name="Fukushima H."/>
            <person name="Dewji N.N."/>
            <person name="Wilcox E."/>
            <person name="O'Brien J.S."/>
            <person name="Helinski D.R."/>
        </authorList>
    </citation>
    <scope>NUCLEOTIDE SEQUENCE [MRNA] OF 75-426</scope>
</reference>
<reference key="10">
    <citation type="journal article" date="1987" name="Enzyme">
        <title>Molecular biology of the alpha-6L-fucosidase gene and fucosidosis.</title>
        <authorList>
            <person name="O'Brien J.S."/>
            <person name="Willems P.J."/>
            <person name="Fukushima H."/>
            <person name="de Wet J.R."/>
            <person name="Darby J.K."/>
            <person name="Dicioccio R.A."/>
            <person name="Fowler M.L."/>
            <person name="Shows T.B."/>
        </authorList>
    </citation>
    <scope>NUCLEOTIDE SEQUENCE [GENOMIC DNA] OF 75-426</scope>
    <scope>VARIANT SER-269</scope>
</reference>
<reference key="11">
    <citation type="journal article" date="1987" name="Glycoconj. J.">
        <title>Structural analysis of the carbohydrate moieties of alpha-L-fucosidase from human liver.</title>
        <authorList>
            <person name="Beem E.P."/>
            <person name="Lisman J.J.W."/>
            <person name="van Steijn G.J."/>
            <person name="van der Wal C.J."/>
            <person name="Trippelvitz L.A.W."/>
            <person name="Overdijk B."/>
            <person name="van Halbeek H."/>
            <person name="Mutsaers J.H.G.M."/>
            <person name="Vliegenthart J.F.G."/>
        </authorList>
    </citation>
    <scope>STRUCTURE OF CARBOHYDRATES</scope>
</reference>
<reference key="12">
    <citation type="journal article" date="1998" name="J. Lipid Res.">
        <title>Degradation of blood group A glycolipid A-6-2 by normal and mutant human skin fibroblasts.</title>
        <authorList>
            <person name="Asfaw B."/>
            <person name="Schindler D."/>
            <person name="Ledvinova J."/>
            <person name="Cerny B."/>
            <person name="Smid F."/>
            <person name="Conzelmann E."/>
        </authorList>
    </citation>
    <scope>FUNCTION</scope>
    <scope>CATALYTIC ACTIVITY</scope>
    <scope>SUBCELLULAR LOCATION</scope>
</reference>
<reference key="13">
    <citation type="journal article" date="2009" name="J. Proteome Res.">
        <title>Glycoproteomics analysis of human liver tissue by combination of multiple enzyme digestion and hydrazide chemistry.</title>
        <authorList>
            <person name="Chen R."/>
            <person name="Jiang X."/>
            <person name="Sun D."/>
            <person name="Han G."/>
            <person name="Wang F."/>
            <person name="Ye M."/>
            <person name="Wang L."/>
            <person name="Zou H."/>
        </authorList>
    </citation>
    <scope>GLYCOSYLATION [LARGE SCALE ANALYSIS] AT ASN-241 AND ASN-382</scope>
    <source>
        <tissue>Liver</tissue>
    </source>
</reference>
<reference key="14">
    <citation type="journal article" date="2011" name="BMC Syst. Biol.">
        <title>Initial characterization of the human central proteome.</title>
        <authorList>
            <person name="Burkard T.R."/>
            <person name="Planyavsky M."/>
            <person name="Kaupe I."/>
            <person name="Breitwieser F.P."/>
            <person name="Buerckstuemmer T."/>
            <person name="Bennett K.L."/>
            <person name="Superti-Furga G."/>
            <person name="Colinge J."/>
        </authorList>
    </citation>
    <scope>IDENTIFICATION BY MASS SPECTROMETRY [LARGE SCALE ANALYSIS]</scope>
</reference>
<reference key="15">
    <citation type="journal article" date="2011" name="Sci. Signal.">
        <title>System-wide temporal characterization of the proteome and phosphoproteome of human embryonic stem cell differentiation.</title>
        <authorList>
            <person name="Rigbolt K.T."/>
            <person name="Prokhorova T.A."/>
            <person name="Akimov V."/>
            <person name="Henningsen J."/>
            <person name="Johansen P.T."/>
            <person name="Kratchmarova I."/>
            <person name="Kassem M."/>
            <person name="Mann M."/>
            <person name="Olsen J.V."/>
            <person name="Blagoev B."/>
        </authorList>
    </citation>
    <scope>PHOSPHORYLATION [LARGE SCALE ANALYSIS] AT THR-170</scope>
    <scope>IDENTIFICATION BY MASS SPECTROMETRY [LARGE SCALE ANALYSIS]</scope>
</reference>
<reference key="16">
    <citation type="journal article" date="2014" name="J. Proteomics">
        <title>An enzyme assisted RP-RPLC approach for in-depth analysis of human liver phosphoproteome.</title>
        <authorList>
            <person name="Bian Y."/>
            <person name="Song C."/>
            <person name="Cheng K."/>
            <person name="Dong M."/>
            <person name="Wang F."/>
            <person name="Huang J."/>
            <person name="Sun D."/>
            <person name="Wang L."/>
            <person name="Ye M."/>
            <person name="Zou H."/>
        </authorList>
    </citation>
    <scope>IDENTIFICATION BY MASS SPECTROMETRY [LARGE SCALE ANALYSIS]</scope>
    <source>
        <tissue>Liver</tissue>
    </source>
</reference>
<reference key="17">
    <citation type="journal article" date="2015" name="Proteomics">
        <title>N-terminome analysis of the human mitochondrial proteome.</title>
        <authorList>
            <person name="Vaca Jacome A.S."/>
            <person name="Rabilloud T."/>
            <person name="Schaeffer-Reiss C."/>
            <person name="Rompais M."/>
            <person name="Ayoub D."/>
            <person name="Lane L."/>
            <person name="Bairoch A."/>
            <person name="Van Dorsselaer A."/>
            <person name="Carapito C."/>
        </authorList>
    </citation>
    <scope>IDENTIFICATION BY MASS SPECTROMETRY [LARGE SCALE ANALYSIS]</scope>
</reference>
<reference key="18">
    <citation type="journal article" date="1993" name="Biochim. Biophys. Acta">
        <title>Pedigree analysis of alpha-L-fucosidase gene mutations in a fucosidosis family.</title>
        <authorList>
            <person name="Yang M."/>
            <person name="Allen H."/>
            <person name="Dicioccio R.A."/>
        </authorList>
    </citation>
    <scope>VARIANT ARG-286</scope>
</reference>
<reference key="19">
    <citation type="journal article" date="1994" name="Hum. Mol. Genet.">
        <title>A missense mutation (S63L) in alpha-L-fucosidase is responsible for fucosidosis in an Italian patient.</title>
        <authorList>
            <person name="Seo H.-C."/>
            <person name="Yang M."/>
            <person name="Tonlorenzi R."/>
            <person name="Willems P.J."/>
            <person name="Kim A.H."/>
            <person name="Filocamo M."/>
            <person name="Gatti R."/>
            <person name="Dicioccio R.A."/>
            <person name="O'Brien J.S."/>
        </authorList>
    </citation>
    <scope>VARIANT FUCA1D LEU-68</scope>
</reference>
<reference key="20">
    <citation type="journal article" date="1994" name="J. Med. Genet.">
        <title>Molecular basis of the common electrophoretic polymorphism (Fu1/Fu2) in human alpha-L-fucosidase.</title>
        <authorList>
            <person name="Cragg H."/>
            <person name="Winchester B."/>
            <person name="Seo H.-C."/>
            <person name="O'Brien J.S."/>
            <person name="Swallow D."/>
        </authorList>
    </citation>
    <scope>VARIANT ARG-286</scope>
</reference>
<reference key="21">
    <citation type="journal article" date="1998" name="J. Inherit. Metab. Dis.">
        <title>A fucosidosis patient with relative longevity and a missense mutation in exon 7 of the alpha-fucosidase gene.</title>
        <authorList>
            <person name="Fleming C.J."/>
            <person name="Sinclair D.U."/>
            <person name="White E.J."/>
            <person name="Winchester B."/>
            <person name="Whiteford M.L."/>
            <person name="Connor J.M."/>
        </authorList>
    </citation>
    <scope>VARIANT FUCA1D ARG-410</scope>
</reference>
<reference key="22">
    <citation type="journal article" date="1999" name="Eur. J. Hum. Genet.">
        <title>Spectrum of mutations in fucosidosis.</title>
        <authorList>
            <person name="Willems P.J."/>
            <person name="Seo H.-C."/>
            <person name="Coucke P."/>
            <person name="Tonlorenzi R."/>
            <person name="O'Brien J.S."/>
        </authorList>
    </citation>
    <scope>REVIEW ON VARIANTS</scope>
</reference>
<reference key="23">
    <citation type="journal article" date="2002" name="J. Inherit. Metab. Dis.">
        <title>A novel FUCA1 mutation causing fucosidosis in a Chinese boy.</title>
        <authorList>
            <person name="Ip P."/>
            <person name="Goh W."/>
            <person name="Chan K.W."/>
            <person name="Cheung P.T."/>
        </authorList>
    </citation>
    <scope>VARIANTS SER-269 AND ARG-286</scope>
</reference>
<dbReference type="EC" id="3.2.1.51" evidence="15"/>
<dbReference type="EMBL" id="M80815">
    <property type="protein sequence ID" value="AAA52481.1"/>
    <property type="status" value="ALT_INIT"/>
    <property type="molecule type" value="Genomic_DNA"/>
</dbReference>
<dbReference type="EMBL" id="M80809">
    <property type="protein sequence ID" value="AAA52481.1"/>
    <property type="status" value="JOINED"/>
    <property type="molecule type" value="Genomic_DNA"/>
</dbReference>
<dbReference type="EMBL" id="M80810">
    <property type="protein sequence ID" value="AAA52481.1"/>
    <property type="status" value="JOINED"/>
    <property type="molecule type" value="Genomic_DNA"/>
</dbReference>
<dbReference type="EMBL" id="M80811">
    <property type="protein sequence ID" value="AAA52481.1"/>
    <property type="status" value="JOINED"/>
    <property type="molecule type" value="Genomic_DNA"/>
</dbReference>
<dbReference type="EMBL" id="M80812">
    <property type="protein sequence ID" value="AAA52481.1"/>
    <property type="status" value="JOINED"/>
    <property type="molecule type" value="Genomic_DNA"/>
</dbReference>
<dbReference type="EMBL" id="M80813">
    <property type="protein sequence ID" value="AAA52481.1"/>
    <property type="status" value="JOINED"/>
    <property type="molecule type" value="Genomic_DNA"/>
</dbReference>
<dbReference type="EMBL" id="M80814">
    <property type="protein sequence ID" value="AAA52481.1"/>
    <property type="status" value="JOINED"/>
    <property type="molecule type" value="Genomic_DNA"/>
</dbReference>
<dbReference type="EMBL" id="AB074175">
    <property type="protein sequence ID" value="BAE45738.1"/>
    <property type="molecule type" value="mRNA"/>
</dbReference>
<dbReference type="EMBL" id="AK092914">
    <property type="protein sequence ID" value="BAC04002.1"/>
    <property type="molecule type" value="mRNA"/>
</dbReference>
<dbReference type="EMBL" id="AK314649">
    <property type="protein sequence ID" value="BAG37210.1"/>
    <property type="status" value="ALT_INIT"/>
    <property type="molecule type" value="mRNA"/>
</dbReference>
<dbReference type="EMBL" id="AL590728">
    <property type="status" value="NOT_ANNOTATED_CDS"/>
    <property type="molecule type" value="Genomic_DNA"/>
</dbReference>
<dbReference type="EMBL" id="BC017338">
    <property type="protein sequence ID" value="AAH17338.1"/>
    <property type="status" value="ALT_INIT"/>
    <property type="molecule type" value="mRNA"/>
</dbReference>
<dbReference type="EMBL" id="M29877">
    <property type="protein sequence ID" value="AAA35519.1"/>
    <property type="status" value="ALT_INIT"/>
    <property type="molecule type" value="mRNA"/>
</dbReference>
<dbReference type="EMBL" id="M10355">
    <property type="protein sequence ID" value="AAA52482.1"/>
    <property type="molecule type" value="mRNA"/>
</dbReference>
<dbReference type="EMBL" id="X01390">
    <property type="protein sequence ID" value="CAA25646.1"/>
    <property type="status" value="ALT_SEQ"/>
    <property type="molecule type" value="mRNA"/>
</dbReference>
<dbReference type="CCDS" id="CCDS244.2"/>
<dbReference type="PIR" id="A33427">
    <property type="entry name" value="HWHUFA"/>
</dbReference>
<dbReference type="RefSeq" id="NP_000138.2">
    <property type="nucleotide sequence ID" value="NM_000147.5"/>
</dbReference>
<dbReference type="PDB" id="7PLS">
    <property type="method" value="EM"/>
    <property type="resolution" value="2.49 A"/>
    <property type="chains" value="A/B/C/D=32-466"/>
</dbReference>
<dbReference type="PDB" id="7PM4">
    <property type="method" value="EM"/>
    <property type="resolution" value="2.49 A"/>
    <property type="chains" value="A/B/C/D=32-466"/>
</dbReference>
<dbReference type="PDBsum" id="7PLS"/>
<dbReference type="PDBsum" id="7PM4"/>
<dbReference type="EMDB" id="EMD-13499"/>
<dbReference type="EMDB" id="EMD-13520"/>
<dbReference type="SMR" id="P04066"/>
<dbReference type="BioGRID" id="108793">
    <property type="interactions" value="40"/>
</dbReference>
<dbReference type="FunCoup" id="P04066">
    <property type="interactions" value="367"/>
</dbReference>
<dbReference type="IntAct" id="P04066">
    <property type="interactions" value="17"/>
</dbReference>
<dbReference type="MINT" id="P04066"/>
<dbReference type="STRING" id="9606.ENSP00000363603"/>
<dbReference type="BindingDB" id="P04066"/>
<dbReference type="ChEMBL" id="CHEMBL4176"/>
<dbReference type="SwissLipids" id="SLP:000001407"/>
<dbReference type="CAZy" id="GH29">
    <property type="family name" value="Glycoside Hydrolase Family 29"/>
</dbReference>
<dbReference type="GlyConnect" id="1810">
    <property type="glycosylation" value="6 N-Linked glycans (2 sites)"/>
</dbReference>
<dbReference type="GlyCosmos" id="P04066">
    <property type="glycosylation" value="4 sites, 8 glycans"/>
</dbReference>
<dbReference type="GlyGen" id="P04066">
    <property type="glycosylation" value="5 sites, 52 N-linked glycans (2 sites), 1 O-linked glycan (1 site)"/>
</dbReference>
<dbReference type="iPTMnet" id="P04066"/>
<dbReference type="MetOSite" id="P04066"/>
<dbReference type="PhosphoSitePlus" id="P04066"/>
<dbReference type="SwissPalm" id="P04066"/>
<dbReference type="BioMuta" id="FUCA1"/>
<dbReference type="DMDM" id="156631012"/>
<dbReference type="CPTAC" id="CPTAC-2215"/>
<dbReference type="jPOST" id="P04066"/>
<dbReference type="MassIVE" id="P04066"/>
<dbReference type="PaxDb" id="9606-ENSP00000363603"/>
<dbReference type="PeptideAtlas" id="P04066"/>
<dbReference type="ProteomicsDB" id="51645"/>
<dbReference type="Pumba" id="P04066"/>
<dbReference type="Antibodypedia" id="30233">
    <property type="antibodies" value="298 antibodies from 29 providers"/>
</dbReference>
<dbReference type="DNASU" id="2517"/>
<dbReference type="Ensembl" id="ENST00000374479.4">
    <property type="protein sequence ID" value="ENSP00000363603.3"/>
    <property type="gene ID" value="ENSG00000179163.12"/>
</dbReference>
<dbReference type="GeneID" id="2517"/>
<dbReference type="KEGG" id="hsa:2517"/>
<dbReference type="MANE-Select" id="ENST00000374479.4">
    <property type="protein sequence ID" value="ENSP00000363603.3"/>
    <property type="RefSeq nucleotide sequence ID" value="NM_000147.5"/>
    <property type="RefSeq protein sequence ID" value="NP_000138.2"/>
</dbReference>
<dbReference type="UCSC" id="uc001bie.5">
    <property type="organism name" value="human"/>
</dbReference>
<dbReference type="AGR" id="HGNC:4006"/>
<dbReference type="CTD" id="2517"/>
<dbReference type="DisGeNET" id="2517"/>
<dbReference type="GeneCards" id="FUCA1"/>
<dbReference type="HGNC" id="HGNC:4006">
    <property type="gene designation" value="FUCA1"/>
</dbReference>
<dbReference type="HPA" id="ENSG00000179163">
    <property type="expression patterns" value="Low tissue specificity"/>
</dbReference>
<dbReference type="MalaCards" id="FUCA1"/>
<dbReference type="MIM" id="230000">
    <property type="type" value="phenotype"/>
</dbReference>
<dbReference type="MIM" id="612280">
    <property type="type" value="gene"/>
</dbReference>
<dbReference type="neXtProt" id="NX_P04066"/>
<dbReference type="OpenTargets" id="ENSG00000179163"/>
<dbReference type="Orphanet" id="349">
    <property type="disease" value="Fucosidosis"/>
</dbReference>
<dbReference type="PharmGKB" id="PA28422"/>
<dbReference type="VEuPathDB" id="HostDB:ENSG00000179163"/>
<dbReference type="eggNOG" id="KOG3340">
    <property type="taxonomic scope" value="Eukaryota"/>
</dbReference>
<dbReference type="GeneTree" id="ENSGT00440000035378"/>
<dbReference type="HOGENOM" id="CLU_002934_1_1_1"/>
<dbReference type="InParanoid" id="P04066"/>
<dbReference type="OMA" id="LPEHKWE"/>
<dbReference type="OrthoDB" id="6039950at2759"/>
<dbReference type="PAN-GO" id="P04066">
    <property type="GO annotations" value="4 GO annotations based on evolutionary models"/>
</dbReference>
<dbReference type="PhylomeDB" id="P04066"/>
<dbReference type="TreeFam" id="TF313034"/>
<dbReference type="BRENDA" id="3.2.1.51">
    <property type="organism ID" value="2681"/>
</dbReference>
<dbReference type="PathwayCommons" id="P04066"/>
<dbReference type="Reactome" id="R-HSA-6798695">
    <property type="pathway name" value="Neutrophil degranulation"/>
</dbReference>
<dbReference type="Reactome" id="R-HSA-975578">
    <property type="pathway name" value="Reactions specific to the complex N-glycan synthesis pathway"/>
</dbReference>
<dbReference type="SABIO-RK" id="P04066"/>
<dbReference type="SignaLink" id="P04066"/>
<dbReference type="BioGRID-ORCS" id="2517">
    <property type="hits" value="15 hits in 1160 CRISPR screens"/>
</dbReference>
<dbReference type="ChiTaRS" id="FUCA1">
    <property type="organism name" value="human"/>
</dbReference>
<dbReference type="GeneWiki" id="Fucosidase"/>
<dbReference type="GenomeRNAi" id="2517"/>
<dbReference type="Pharos" id="P04066">
    <property type="development level" value="Tchem"/>
</dbReference>
<dbReference type="PRO" id="PR:P04066"/>
<dbReference type="Proteomes" id="UP000005640">
    <property type="component" value="Chromosome 1"/>
</dbReference>
<dbReference type="RNAct" id="P04066">
    <property type="molecule type" value="protein"/>
</dbReference>
<dbReference type="Bgee" id="ENSG00000179163">
    <property type="expression patterns" value="Expressed in mucosa of sigmoid colon and 205 other cell types or tissues"/>
</dbReference>
<dbReference type="GO" id="GO:0035578">
    <property type="term" value="C:azurophil granule lumen"/>
    <property type="evidence" value="ECO:0000304"/>
    <property type="project" value="Reactome"/>
</dbReference>
<dbReference type="GO" id="GO:0005737">
    <property type="term" value="C:cytoplasm"/>
    <property type="evidence" value="ECO:0000304"/>
    <property type="project" value="ProtInc"/>
</dbReference>
<dbReference type="GO" id="GO:0070062">
    <property type="term" value="C:extracellular exosome"/>
    <property type="evidence" value="ECO:0007005"/>
    <property type="project" value="UniProtKB"/>
</dbReference>
<dbReference type="GO" id="GO:0005576">
    <property type="term" value="C:extracellular region"/>
    <property type="evidence" value="ECO:0000304"/>
    <property type="project" value="Reactome"/>
</dbReference>
<dbReference type="GO" id="GO:0043231">
    <property type="term" value="C:intracellular membrane-bounded organelle"/>
    <property type="evidence" value="ECO:0000314"/>
    <property type="project" value="HPA"/>
</dbReference>
<dbReference type="GO" id="GO:0043202">
    <property type="term" value="C:lysosomal lumen"/>
    <property type="evidence" value="ECO:0000304"/>
    <property type="project" value="Reactome"/>
</dbReference>
<dbReference type="GO" id="GO:0005764">
    <property type="term" value="C:lysosome"/>
    <property type="evidence" value="ECO:0000318"/>
    <property type="project" value="GO_Central"/>
</dbReference>
<dbReference type="GO" id="GO:0016020">
    <property type="term" value="C:membrane"/>
    <property type="evidence" value="ECO:0007669"/>
    <property type="project" value="GOC"/>
</dbReference>
<dbReference type="GO" id="GO:0004560">
    <property type="term" value="F:alpha-L-fucosidase activity"/>
    <property type="evidence" value="ECO:0000314"/>
    <property type="project" value="UniProtKB"/>
</dbReference>
<dbReference type="GO" id="GO:0006004">
    <property type="term" value="P:fucose metabolic process"/>
    <property type="evidence" value="ECO:0000314"/>
    <property type="project" value="UniProtKB"/>
</dbReference>
<dbReference type="GO" id="GO:0019377">
    <property type="term" value="P:glycolipid catabolic process"/>
    <property type="evidence" value="ECO:0000250"/>
    <property type="project" value="BHF-UCL"/>
</dbReference>
<dbReference type="GO" id="GO:0016139">
    <property type="term" value="P:glycoside catabolic process"/>
    <property type="evidence" value="ECO:0000314"/>
    <property type="project" value="UniProtKB"/>
</dbReference>
<dbReference type="FunFam" id="2.60.40.1180:FF:000013">
    <property type="entry name" value="Alpha-L-fucosidase"/>
    <property type="match status" value="1"/>
</dbReference>
<dbReference type="FunFam" id="3.20.20.80:FF:000027">
    <property type="entry name" value="Alpha-L-fucosidase"/>
    <property type="match status" value="1"/>
</dbReference>
<dbReference type="Gene3D" id="3.20.20.80">
    <property type="entry name" value="Glycosidases"/>
    <property type="match status" value="1"/>
</dbReference>
<dbReference type="Gene3D" id="2.60.40.1180">
    <property type="entry name" value="Golgi alpha-mannosidase II"/>
    <property type="match status" value="1"/>
</dbReference>
<dbReference type="InterPro" id="IPR016286">
    <property type="entry name" value="FUC_metazoa-typ"/>
</dbReference>
<dbReference type="InterPro" id="IPR031919">
    <property type="entry name" value="Fucosidase_C"/>
</dbReference>
<dbReference type="InterPro" id="IPR000933">
    <property type="entry name" value="Glyco_hydro_29"/>
</dbReference>
<dbReference type="InterPro" id="IPR018526">
    <property type="entry name" value="Glyco_hydro_29_CS"/>
</dbReference>
<dbReference type="InterPro" id="IPR013780">
    <property type="entry name" value="Glyco_hydro_b"/>
</dbReference>
<dbReference type="InterPro" id="IPR017853">
    <property type="entry name" value="Glycoside_hydrolase_SF"/>
</dbReference>
<dbReference type="PANTHER" id="PTHR10030">
    <property type="entry name" value="ALPHA-L-FUCOSIDASE"/>
    <property type="match status" value="1"/>
</dbReference>
<dbReference type="PANTHER" id="PTHR10030:SF2">
    <property type="entry name" value="TISSUE ALPHA-L-FUCOSIDASE"/>
    <property type="match status" value="1"/>
</dbReference>
<dbReference type="Pfam" id="PF01120">
    <property type="entry name" value="Alpha_L_fucos"/>
    <property type="match status" value="1"/>
</dbReference>
<dbReference type="Pfam" id="PF16757">
    <property type="entry name" value="Fucosidase_C"/>
    <property type="match status" value="1"/>
</dbReference>
<dbReference type="PIRSF" id="PIRSF001092">
    <property type="entry name" value="Alpha-L-fucosidase"/>
    <property type="match status" value="1"/>
</dbReference>
<dbReference type="PRINTS" id="PR00741">
    <property type="entry name" value="GLHYDRLASE29"/>
</dbReference>
<dbReference type="SMART" id="SM00812">
    <property type="entry name" value="Alpha_L_fucos"/>
    <property type="match status" value="1"/>
</dbReference>
<dbReference type="SUPFAM" id="SSF51445">
    <property type="entry name" value="(Trans)glycosidases"/>
    <property type="match status" value="1"/>
</dbReference>
<dbReference type="PROSITE" id="PS00385">
    <property type="entry name" value="ALPHA_L_FUCOSIDASE"/>
    <property type="match status" value="1"/>
</dbReference>
<feature type="signal peptide" evidence="1">
    <location>
        <begin position="1"/>
        <end position="31"/>
    </location>
</feature>
<feature type="chain" id="PRO_0000010308" description="Tissue alpha-L-fucosidase">
    <location>
        <begin position="32"/>
        <end position="466"/>
    </location>
</feature>
<feature type="site" description="May be important for catalysis">
    <location>
        <position position="296"/>
    </location>
</feature>
<feature type="modified residue" description="Phosphothreonine" evidence="17">
    <location>
        <position position="170"/>
    </location>
</feature>
<feature type="glycosylation site" description="N-linked (GlcNAc...) asparagine" evidence="5">
    <location>
        <position position="241"/>
    </location>
</feature>
<feature type="glycosylation site" description="N-linked (GlcNAc...) asparagine" evidence="1">
    <location>
        <position position="268"/>
    </location>
</feature>
<feature type="glycosylation site" description="N-linked (GlcNAc...) asparagine" evidence="5">
    <location>
        <position position="382"/>
    </location>
</feature>
<feature type="sequence variant" id="VAR_049106" description="In dbSNP:rs2070955.">
    <original>R</original>
    <variation>W</variation>
    <location>
        <position position="2"/>
    </location>
</feature>
<feature type="sequence variant" id="VAR_016233" description="In dbSNP:rs2070956.">
    <original>P</original>
    <variation>R</variation>
    <location>
        <position position="10"/>
    </location>
</feature>
<feature type="sequence variant" id="VAR_002442" description="In FUCA1D; loss of activity; dbSNP:rs1353778985." evidence="11">
    <original>G</original>
    <variation>D</variation>
    <location>
        <position position="65"/>
    </location>
</feature>
<feature type="sequence variant" id="VAR_002443" description="In FUCA1D." evidence="9">
    <original>S</original>
    <variation>L</variation>
    <location>
        <position position="68"/>
    </location>
</feature>
<feature type="sequence variant" id="VAR_049107" description="In dbSNP:rs2228424.">
    <original>P</original>
    <variation>L</variation>
    <location>
        <position position="146"/>
    </location>
</feature>
<feature type="sequence variant" id="VAR_049108" description="In dbSNP:rs665.">
    <original>V</original>
    <variation>I</variation>
    <location>
        <position position="260"/>
    </location>
</feature>
<feature type="sequence variant" id="VAR_016234" description="In dbSNP:rs1126512." evidence="3 6 7">
    <original>C</original>
    <variation>S</variation>
    <location>
        <position position="269"/>
    </location>
</feature>
<feature type="sequence variant" id="VAR_002444" description="In allele FUCA1*2; dbSNP:rs13551." evidence="3 4 8 10 11">
    <original>Q</original>
    <variation>R</variation>
    <location>
        <position position="286"/>
    </location>
</feature>
<feature type="sequence variant" id="VAR_016235" description="In FUCA1D; less than 1% of residual activity; dbSNP:rs80358199." evidence="13">
    <original>L</original>
    <variation>R</variation>
    <location>
        <position position="410"/>
    </location>
</feature>
<feature type="sequence conflict" description="In Ref. 3; BAC04002." evidence="14" ref="3">
    <original>DEA</original>
    <variation>NEV</variation>
    <location>
        <begin position="54"/>
        <end position="56"/>
    </location>
</feature>
<feature type="sequence conflict" description="In Ref. 7; no nucleotide entry." evidence="14" ref="7">
    <original>S</original>
    <variation>T</variation>
    <location>
        <position position="74"/>
    </location>
</feature>
<feature type="sequence conflict" description="In Ref. 8; AAA52482 and 9; CAA25646." evidence="14" ref="8 9">
    <original>WF</original>
    <variation>FL</variation>
    <location>
        <begin position="76"/>
        <end position="77"/>
    </location>
</feature>
<feature type="sequence conflict" description="In Ref. 3; BAC04002." evidence="14" ref="3">
    <location>
        <begin position="93"/>
        <end position="114"/>
    </location>
</feature>
<feature type="sequence conflict" description="In Ref. 3; BAC04002." evidence="14" ref="3">
    <original>A</original>
    <variation>T</variation>
    <location>
        <position position="127"/>
    </location>
</feature>
<feature type="sequence conflict" description="In Ref. 3; BAC04002." evidence="14" ref="3">
    <original>A</original>
    <variation>G</variation>
    <location>
        <position position="171"/>
    </location>
</feature>
<feature type="sequence conflict" description="In Ref. 3; BAC04002." evidence="14" ref="3">
    <original>N</original>
    <variation>D</variation>
    <location>
        <position position="244"/>
    </location>
</feature>
<feature type="sequence conflict" description="In Ref. 8; AAA52482." evidence="14" ref="8">
    <original>Q</original>
    <variation>P</variation>
    <location>
        <position position="427"/>
    </location>
</feature>
<feature type="helix" evidence="18">
    <location>
        <begin position="41"/>
        <end position="44"/>
    </location>
</feature>
<feature type="helix" evidence="18">
    <location>
        <begin position="51"/>
        <end position="56"/>
    </location>
</feature>
<feature type="strand" evidence="18">
    <location>
        <begin position="58"/>
        <end position="62"/>
    </location>
</feature>
<feature type="helix" evidence="18">
    <location>
        <begin position="66"/>
        <end position="68"/>
    </location>
</feature>
<feature type="helix" evidence="18">
    <location>
        <begin position="77"/>
        <end position="81"/>
    </location>
</feature>
<feature type="helix" evidence="18">
    <location>
        <begin position="87"/>
        <end position="96"/>
    </location>
</feature>
<feature type="helix" evidence="18">
    <location>
        <begin position="103"/>
        <end position="109"/>
    </location>
</feature>
<feature type="helix" evidence="18">
    <location>
        <begin position="117"/>
        <end position="126"/>
    </location>
</feature>
<feature type="strand" evidence="18">
    <location>
        <begin position="130"/>
        <end position="137"/>
    </location>
</feature>
<feature type="strand" evidence="18">
    <location>
        <begin position="143"/>
        <end position="145"/>
    </location>
</feature>
<feature type="turn" evidence="18">
    <location>
        <begin position="155"/>
        <end position="157"/>
    </location>
</feature>
<feature type="helix" evidence="18">
    <location>
        <begin position="164"/>
        <end position="174"/>
    </location>
</feature>
<feature type="strand" evidence="18">
    <location>
        <begin position="178"/>
        <end position="185"/>
    </location>
</feature>
<feature type="helix" evidence="18">
    <location>
        <begin position="191"/>
        <end position="198"/>
    </location>
</feature>
<feature type="turn" evidence="18">
    <location>
        <begin position="199"/>
        <end position="201"/>
    </location>
</feature>
<feature type="helix" evidence="18">
    <location>
        <begin position="205"/>
        <end position="209"/>
    </location>
</feature>
<feature type="helix" evidence="18">
    <location>
        <begin position="211"/>
        <end position="220"/>
    </location>
</feature>
<feature type="strand" evidence="18">
    <location>
        <begin position="225"/>
        <end position="230"/>
    </location>
</feature>
<feature type="helix" evidence="18">
    <location>
        <begin position="237"/>
        <end position="240"/>
    </location>
</feature>
<feature type="helix" evidence="18">
    <location>
        <begin position="242"/>
        <end position="251"/>
    </location>
</feature>
<feature type="strand" evidence="18">
    <location>
        <begin position="256"/>
        <end position="258"/>
    </location>
</feature>
<feature type="turn" evidence="18">
    <location>
        <begin position="270"/>
        <end position="272"/>
    </location>
</feature>
<feature type="strand" evidence="18">
    <location>
        <begin position="273"/>
        <end position="277"/>
    </location>
</feature>
<feature type="strand" evidence="18">
    <location>
        <begin position="293"/>
        <end position="300"/>
    </location>
</feature>
<feature type="helix" evidence="18">
    <location>
        <begin position="312"/>
        <end position="314"/>
    </location>
</feature>
<feature type="helix" evidence="18">
    <location>
        <begin position="318"/>
        <end position="330"/>
    </location>
</feature>
<feature type="strand" evidence="18">
    <location>
        <begin position="333"/>
        <end position="339"/>
    </location>
</feature>
<feature type="helix" evidence="18">
    <location>
        <begin position="349"/>
        <end position="365"/>
    </location>
</feature>
<feature type="helix" evidence="18">
    <location>
        <begin position="366"/>
        <end position="368"/>
    </location>
</feature>
<feature type="turn" evidence="18">
    <location>
        <begin position="369"/>
        <end position="371"/>
    </location>
</feature>
<feature type="strand" evidence="18">
    <location>
        <begin position="373"/>
        <end position="379"/>
    </location>
</feature>
<feature type="strand" evidence="18">
    <location>
        <begin position="381"/>
        <end position="391"/>
    </location>
</feature>
<feature type="strand" evidence="18">
    <location>
        <begin position="394"/>
        <end position="401"/>
    </location>
</feature>
<feature type="strand" evidence="18">
    <location>
        <begin position="406"/>
        <end position="412"/>
    </location>
</feature>
<feature type="strand" evidence="18">
    <location>
        <begin position="414"/>
        <end position="421"/>
    </location>
</feature>
<feature type="strand" evidence="18">
    <location>
        <begin position="432"/>
        <end position="434"/>
    </location>
</feature>
<feature type="strand" evidence="18">
    <location>
        <begin position="436"/>
        <end position="438"/>
    </location>
</feature>
<feature type="strand" evidence="18">
    <location>
        <begin position="440"/>
        <end position="443"/>
    </location>
</feature>
<feature type="strand" evidence="18">
    <location>
        <begin position="458"/>
        <end position="466"/>
    </location>
</feature>
<protein>
    <recommendedName>
        <fullName evidence="14">Tissue alpha-L-fucosidase</fullName>
        <ecNumber evidence="15">3.2.1.51</ecNumber>
    </recommendedName>
    <alternativeName>
        <fullName>Alpha-L-fucosidase I</fullName>
    </alternativeName>
    <alternativeName>
        <fullName>Alpha-L-fucoside fucohydrolase 1</fullName>
        <shortName>Alpha-L-fucosidase 1</shortName>
    </alternativeName>
</protein>
<name>FUCO_HUMAN</name>
<gene>
    <name evidence="16" type="primary">FUCA1</name>
    <name type="ORF">Nbla10230</name>
</gene>
<sequence>MRAPGMRSRPAGPALLLLLLFLGAAESVRRAQPPRRYTPDWPSLDSRPLPAWFDEAKFGVFIHWGVFSVPAWGSEWFWWHWQGEGRPQYQRFMRDNYPPGFSYADFGPQFTARFFHPEEWADLFQAAGAKYVVLTTKHHEGFTNWPSPVSWNWNSKDVGPHRDLVGELGTALRKRNIRYGLYHSLLEWFHPLYLLDKKNGFKTQHFVSAKTMPELYDLVNSYKPDLIWSDGEWECPDTYWNSTNFLSWLYNDSPVKDEVVVNDRWGQNCSCHHGGYYNCEDKFKPQSLPDHKWEMCTSIDKFSWGYRRDMALSDVTEESEIISELVQTVSLGGNYLLNIGPTKDGLIVPIFQERLLAVGKWLSINGEAIYASKPWRVQWEKNTTSVWYTSKGSAVYAIFLHWPENGVLNLESPITTSTTKITMLGIQGDLKWSTDPDKGLFISLPQLPPSAVPAEFAWTIKLTGVK</sequence>